<protein>
    <recommendedName>
        <fullName evidence="1">Pyrimidine/purine nucleoside phosphorylase</fullName>
        <ecNumber evidence="1">2.4.2.1</ecNumber>
        <ecNumber evidence="1">2.4.2.2</ecNumber>
    </recommendedName>
    <alternativeName>
        <fullName evidence="1">Adenosine phosphorylase</fullName>
    </alternativeName>
    <alternativeName>
        <fullName evidence="1">Cytidine phosphorylase</fullName>
    </alternativeName>
    <alternativeName>
        <fullName evidence="1">Guanosine phosphorylase</fullName>
    </alternativeName>
    <alternativeName>
        <fullName evidence="1">Inosine phosphorylase</fullName>
    </alternativeName>
    <alternativeName>
        <fullName evidence="1">Thymidine phosphorylase</fullName>
    </alternativeName>
    <alternativeName>
        <fullName evidence="1">Uridine phosphorylase</fullName>
    </alternativeName>
    <alternativeName>
        <fullName evidence="1">Xanthosine phosphorylase</fullName>
    </alternativeName>
</protein>
<sequence>MLQSNEYFSGKVKSIGFSSSSTGRASVGVMVEGEYTFSTAEPEEMTVISGALNVLLPDATDWQVYEAGSVFNVPGHSEFHLQVAEPTSYLCRYL</sequence>
<reference key="1">
    <citation type="journal article" date="2008" name="DNA Res.">
        <title>Complete genome sequence and comparative analysis of the wild-type commensal Escherichia coli strain SE11 isolated from a healthy adult.</title>
        <authorList>
            <person name="Oshima K."/>
            <person name="Toh H."/>
            <person name="Ogura Y."/>
            <person name="Sasamoto H."/>
            <person name="Morita H."/>
            <person name="Park S.-H."/>
            <person name="Ooka T."/>
            <person name="Iyoda S."/>
            <person name="Taylor T.D."/>
            <person name="Hayashi T."/>
            <person name="Itoh K."/>
            <person name="Hattori M."/>
        </authorList>
    </citation>
    <scope>NUCLEOTIDE SEQUENCE [LARGE SCALE GENOMIC DNA]</scope>
    <source>
        <strain>SE11</strain>
    </source>
</reference>
<dbReference type="EC" id="2.4.2.1" evidence="1"/>
<dbReference type="EC" id="2.4.2.2" evidence="1"/>
<dbReference type="EMBL" id="AP009240">
    <property type="protein sequence ID" value="BAG75936.1"/>
    <property type="molecule type" value="Genomic_DNA"/>
</dbReference>
<dbReference type="RefSeq" id="WP_000941942.1">
    <property type="nucleotide sequence ID" value="NC_011415.1"/>
</dbReference>
<dbReference type="SMR" id="B6HZJ1"/>
<dbReference type="GeneID" id="93777070"/>
<dbReference type="KEGG" id="ecy:ECSE_0412"/>
<dbReference type="HOGENOM" id="CLU_157874_0_0_6"/>
<dbReference type="Proteomes" id="UP000008199">
    <property type="component" value="Chromosome"/>
</dbReference>
<dbReference type="GO" id="GO:0005829">
    <property type="term" value="C:cytosol"/>
    <property type="evidence" value="ECO:0007669"/>
    <property type="project" value="TreeGrafter"/>
</dbReference>
<dbReference type="GO" id="GO:0047975">
    <property type="term" value="F:guanosine phosphorylase activity"/>
    <property type="evidence" value="ECO:0007669"/>
    <property type="project" value="UniProtKB-EC"/>
</dbReference>
<dbReference type="GO" id="GO:0004731">
    <property type="term" value="F:purine-nucleoside phosphorylase activity"/>
    <property type="evidence" value="ECO:0007669"/>
    <property type="project" value="UniProtKB-UniRule"/>
</dbReference>
<dbReference type="GO" id="GO:0009032">
    <property type="term" value="F:thymidine phosphorylase activity"/>
    <property type="evidence" value="ECO:0007669"/>
    <property type="project" value="UniProtKB-EC"/>
</dbReference>
<dbReference type="GO" id="GO:0004850">
    <property type="term" value="F:uridine phosphorylase activity"/>
    <property type="evidence" value="ECO:0007669"/>
    <property type="project" value="UniProtKB-EC"/>
</dbReference>
<dbReference type="CDD" id="cd20296">
    <property type="entry name" value="cupin_PpnP-like"/>
    <property type="match status" value="1"/>
</dbReference>
<dbReference type="FunFam" id="2.60.120.10:FF:000016">
    <property type="entry name" value="Pyrimidine/purine nucleoside phosphorylase"/>
    <property type="match status" value="1"/>
</dbReference>
<dbReference type="Gene3D" id="2.60.120.10">
    <property type="entry name" value="Jelly Rolls"/>
    <property type="match status" value="1"/>
</dbReference>
<dbReference type="HAMAP" id="MF_01537">
    <property type="entry name" value="Nucleos_phosphorylase_PpnP"/>
    <property type="match status" value="1"/>
</dbReference>
<dbReference type="InterPro" id="IPR009664">
    <property type="entry name" value="Ppnp"/>
</dbReference>
<dbReference type="InterPro" id="IPR014710">
    <property type="entry name" value="RmlC-like_jellyroll"/>
</dbReference>
<dbReference type="InterPro" id="IPR011051">
    <property type="entry name" value="RmlC_Cupin_sf"/>
</dbReference>
<dbReference type="NCBIfam" id="NF007875">
    <property type="entry name" value="PRK10579.1"/>
    <property type="match status" value="1"/>
</dbReference>
<dbReference type="PANTHER" id="PTHR36540">
    <property type="entry name" value="PYRIMIDINE/PURINE NUCLEOSIDE PHOSPHORYLASE"/>
    <property type="match status" value="1"/>
</dbReference>
<dbReference type="PANTHER" id="PTHR36540:SF1">
    <property type="entry name" value="PYRIMIDINE_PURINE NUCLEOSIDE PHOSPHORYLASE"/>
    <property type="match status" value="1"/>
</dbReference>
<dbReference type="Pfam" id="PF06865">
    <property type="entry name" value="Ppnp"/>
    <property type="match status" value="1"/>
</dbReference>
<dbReference type="SUPFAM" id="SSF51182">
    <property type="entry name" value="RmlC-like cupins"/>
    <property type="match status" value="1"/>
</dbReference>
<comment type="function">
    <text evidence="1">Catalyzes the phosphorolysis of diverse nucleosides, yielding D-ribose 1-phosphate and the respective free bases. Can use uridine, adenosine, guanosine, cytidine, thymidine, inosine and xanthosine as substrates. Also catalyzes the reverse reactions.</text>
</comment>
<comment type="catalytic activity">
    <reaction evidence="1">
        <text>a purine D-ribonucleoside + phosphate = a purine nucleobase + alpha-D-ribose 1-phosphate</text>
        <dbReference type="Rhea" id="RHEA:19805"/>
        <dbReference type="ChEBI" id="CHEBI:26386"/>
        <dbReference type="ChEBI" id="CHEBI:43474"/>
        <dbReference type="ChEBI" id="CHEBI:57720"/>
        <dbReference type="ChEBI" id="CHEBI:142355"/>
        <dbReference type="EC" id="2.4.2.1"/>
    </reaction>
</comment>
<comment type="catalytic activity">
    <reaction evidence="1">
        <text>adenosine + phosphate = alpha-D-ribose 1-phosphate + adenine</text>
        <dbReference type="Rhea" id="RHEA:27642"/>
        <dbReference type="ChEBI" id="CHEBI:16335"/>
        <dbReference type="ChEBI" id="CHEBI:16708"/>
        <dbReference type="ChEBI" id="CHEBI:43474"/>
        <dbReference type="ChEBI" id="CHEBI:57720"/>
        <dbReference type="EC" id="2.4.2.1"/>
    </reaction>
</comment>
<comment type="catalytic activity">
    <reaction evidence="1">
        <text>cytidine + phosphate = cytosine + alpha-D-ribose 1-phosphate</text>
        <dbReference type="Rhea" id="RHEA:52540"/>
        <dbReference type="ChEBI" id="CHEBI:16040"/>
        <dbReference type="ChEBI" id="CHEBI:17562"/>
        <dbReference type="ChEBI" id="CHEBI:43474"/>
        <dbReference type="ChEBI" id="CHEBI:57720"/>
        <dbReference type="EC" id="2.4.2.2"/>
    </reaction>
</comment>
<comment type="catalytic activity">
    <reaction evidence="1">
        <text>guanosine + phosphate = alpha-D-ribose 1-phosphate + guanine</text>
        <dbReference type="Rhea" id="RHEA:13233"/>
        <dbReference type="ChEBI" id="CHEBI:16235"/>
        <dbReference type="ChEBI" id="CHEBI:16750"/>
        <dbReference type="ChEBI" id="CHEBI:43474"/>
        <dbReference type="ChEBI" id="CHEBI:57720"/>
        <dbReference type="EC" id="2.4.2.1"/>
    </reaction>
</comment>
<comment type="catalytic activity">
    <reaction evidence="1">
        <text>inosine + phosphate = alpha-D-ribose 1-phosphate + hypoxanthine</text>
        <dbReference type="Rhea" id="RHEA:27646"/>
        <dbReference type="ChEBI" id="CHEBI:17368"/>
        <dbReference type="ChEBI" id="CHEBI:17596"/>
        <dbReference type="ChEBI" id="CHEBI:43474"/>
        <dbReference type="ChEBI" id="CHEBI:57720"/>
        <dbReference type="EC" id="2.4.2.1"/>
    </reaction>
</comment>
<comment type="catalytic activity">
    <reaction evidence="1">
        <text>thymidine + phosphate = 2-deoxy-alpha-D-ribose 1-phosphate + thymine</text>
        <dbReference type="Rhea" id="RHEA:16037"/>
        <dbReference type="ChEBI" id="CHEBI:17748"/>
        <dbReference type="ChEBI" id="CHEBI:17821"/>
        <dbReference type="ChEBI" id="CHEBI:43474"/>
        <dbReference type="ChEBI" id="CHEBI:57259"/>
        <dbReference type="EC" id="2.4.2.2"/>
    </reaction>
</comment>
<comment type="catalytic activity">
    <reaction evidence="1">
        <text>uridine + phosphate = alpha-D-ribose 1-phosphate + uracil</text>
        <dbReference type="Rhea" id="RHEA:24388"/>
        <dbReference type="ChEBI" id="CHEBI:16704"/>
        <dbReference type="ChEBI" id="CHEBI:17568"/>
        <dbReference type="ChEBI" id="CHEBI:43474"/>
        <dbReference type="ChEBI" id="CHEBI:57720"/>
        <dbReference type="EC" id="2.4.2.2"/>
    </reaction>
</comment>
<comment type="catalytic activity">
    <reaction evidence="1">
        <text>xanthosine + phosphate = alpha-D-ribose 1-phosphate + xanthine</text>
        <dbReference type="Rhea" id="RHEA:27638"/>
        <dbReference type="ChEBI" id="CHEBI:17712"/>
        <dbReference type="ChEBI" id="CHEBI:18107"/>
        <dbReference type="ChEBI" id="CHEBI:43474"/>
        <dbReference type="ChEBI" id="CHEBI:57720"/>
        <dbReference type="EC" id="2.4.2.1"/>
    </reaction>
</comment>
<comment type="similarity">
    <text evidence="1">Belongs to the nucleoside phosphorylase PpnP family.</text>
</comment>
<name>PPNP_ECOSE</name>
<keyword id="KW-0328">Glycosyltransferase</keyword>
<keyword id="KW-0808">Transferase</keyword>
<accession>B6HZJ1</accession>
<gene>
    <name evidence="1" type="primary">ppnP</name>
    <name type="ordered locus">ECSE_0412</name>
</gene>
<proteinExistence type="inferred from homology"/>
<feature type="chain" id="PRO_1000198658" description="Pyrimidine/purine nucleoside phosphorylase">
    <location>
        <begin position="1"/>
        <end position="94"/>
    </location>
</feature>
<organism>
    <name type="scientific">Escherichia coli (strain SE11)</name>
    <dbReference type="NCBI Taxonomy" id="409438"/>
    <lineage>
        <taxon>Bacteria</taxon>
        <taxon>Pseudomonadati</taxon>
        <taxon>Pseudomonadota</taxon>
        <taxon>Gammaproteobacteria</taxon>
        <taxon>Enterobacterales</taxon>
        <taxon>Enterobacteriaceae</taxon>
        <taxon>Escherichia</taxon>
    </lineage>
</organism>
<evidence type="ECO:0000255" key="1">
    <source>
        <dbReference type="HAMAP-Rule" id="MF_01537"/>
    </source>
</evidence>